<name>ATPG_CAMJE</name>
<dbReference type="EMBL" id="AL111168">
    <property type="protein sequence ID" value="CAL34277.1"/>
    <property type="molecule type" value="Genomic_DNA"/>
</dbReference>
<dbReference type="PIR" id="B81427">
    <property type="entry name" value="B81427"/>
</dbReference>
<dbReference type="RefSeq" id="WP_002851834.1">
    <property type="nucleotide sequence ID" value="NZ_SZUC01000005.1"/>
</dbReference>
<dbReference type="RefSeq" id="YP_002343566.1">
    <property type="nucleotide sequence ID" value="NC_002163.1"/>
</dbReference>
<dbReference type="SMR" id="Q9PJ20"/>
<dbReference type="IntAct" id="Q9PJ20">
    <property type="interactions" value="26"/>
</dbReference>
<dbReference type="STRING" id="192222.Cj0106"/>
<dbReference type="PaxDb" id="192222-Cj0106"/>
<dbReference type="EnsemblBacteria" id="CAL34277">
    <property type="protein sequence ID" value="CAL34277"/>
    <property type="gene ID" value="Cj0106"/>
</dbReference>
<dbReference type="GeneID" id="904436"/>
<dbReference type="KEGG" id="cje:Cj0106"/>
<dbReference type="PATRIC" id="fig|192222.6.peg.104"/>
<dbReference type="eggNOG" id="COG0224">
    <property type="taxonomic scope" value="Bacteria"/>
</dbReference>
<dbReference type="HOGENOM" id="CLU_050669_0_1_7"/>
<dbReference type="OrthoDB" id="9812769at2"/>
<dbReference type="Proteomes" id="UP000000799">
    <property type="component" value="Chromosome"/>
</dbReference>
<dbReference type="GO" id="GO:0005886">
    <property type="term" value="C:plasma membrane"/>
    <property type="evidence" value="ECO:0007669"/>
    <property type="project" value="UniProtKB-SubCell"/>
</dbReference>
<dbReference type="GO" id="GO:0045259">
    <property type="term" value="C:proton-transporting ATP synthase complex"/>
    <property type="evidence" value="ECO:0007669"/>
    <property type="project" value="UniProtKB-KW"/>
</dbReference>
<dbReference type="GO" id="GO:0005524">
    <property type="term" value="F:ATP binding"/>
    <property type="evidence" value="ECO:0007669"/>
    <property type="project" value="UniProtKB-UniRule"/>
</dbReference>
<dbReference type="GO" id="GO:0046933">
    <property type="term" value="F:proton-transporting ATP synthase activity, rotational mechanism"/>
    <property type="evidence" value="ECO:0007669"/>
    <property type="project" value="UniProtKB-UniRule"/>
</dbReference>
<dbReference type="GO" id="GO:0042777">
    <property type="term" value="P:proton motive force-driven plasma membrane ATP synthesis"/>
    <property type="evidence" value="ECO:0007669"/>
    <property type="project" value="UniProtKB-UniRule"/>
</dbReference>
<dbReference type="CDD" id="cd12151">
    <property type="entry name" value="F1-ATPase_gamma"/>
    <property type="match status" value="1"/>
</dbReference>
<dbReference type="FunFam" id="3.40.1380.10:FF:000006">
    <property type="entry name" value="ATP synthase gamma chain"/>
    <property type="match status" value="1"/>
</dbReference>
<dbReference type="Gene3D" id="3.40.1380.10">
    <property type="match status" value="1"/>
</dbReference>
<dbReference type="Gene3D" id="1.10.287.80">
    <property type="entry name" value="ATP synthase, gamma subunit, helix hairpin domain"/>
    <property type="match status" value="1"/>
</dbReference>
<dbReference type="HAMAP" id="MF_00815">
    <property type="entry name" value="ATP_synth_gamma_bact"/>
    <property type="match status" value="1"/>
</dbReference>
<dbReference type="InterPro" id="IPR035968">
    <property type="entry name" value="ATP_synth_F1_ATPase_gsu"/>
</dbReference>
<dbReference type="InterPro" id="IPR000131">
    <property type="entry name" value="ATP_synth_F1_gsu"/>
</dbReference>
<dbReference type="NCBIfam" id="TIGR01146">
    <property type="entry name" value="ATPsyn_F1gamma"/>
    <property type="match status" value="1"/>
</dbReference>
<dbReference type="PANTHER" id="PTHR11693">
    <property type="entry name" value="ATP SYNTHASE GAMMA CHAIN"/>
    <property type="match status" value="1"/>
</dbReference>
<dbReference type="PANTHER" id="PTHR11693:SF22">
    <property type="entry name" value="ATP SYNTHASE SUBUNIT GAMMA, MITOCHONDRIAL"/>
    <property type="match status" value="1"/>
</dbReference>
<dbReference type="Pfam" id="PF00231">
    <property type="entry name" value="ATP-synt"/>
    <property type="match status" value="1"/>
</dbReference>
<dbReference type="PRINTS" id="PR00126">
    <property type="entry name" value="ATPASEGAMMA"/>
</dbReference>
<dbReference type="SUPFAM" id="SSF52943">
    <property type="entry name" value="ATP synthase (F1-ATPase), gamma subunit"/>
    <property type="match status" value="1"/>
</dbReference>
<sequence length="294" mass="33660">MSNLKEIKRKIKSVHNTQKTTNAMKLVSTAKLKKAEEAAKRSKIYAQKIDEILSEISFQINKIVHNEDDVRLSLFHKKEQIKTVDLIFITADKGLCGGFNIKTLKTVSEMLKEYEAKNINIRLRAIGKTGIEYFNFQKIELLEKYFHLSSSPDYEKACEVIHAAVDDFLNGNTDEVILVHNGYKNMITQELKINHLIPVEPKSIEQTHNSLLELEPEGTELLKDLMKTYFEYNMYYALIDSLAAEHSARMQAMDNATNNAKARVKQLNLAYNKARQESITTELIEIISGVESMK</sequence>
<evidence type="ECO:0000255" key="1">
    <source>
        <dbReference type="HAMAP-Rule" id="MF_00815"/>
    </source>
</evidence>
<gene>
    <name evidence="1" type="primary">atpG</name>
    <name type="ordered locus">Cj0106</name>
</gene>
<proteinExistence type="inferred from homology"/>
<protein>
    <recommendedName>
        <fullName evidence="1">ATP synthase gamma chain</fullName>
    </recommendedName>
    <alternativeName>
        <fullName evidence="1">ATP synthase F1 sector gamma subunit</fullName>
    </alternativeName>
    <alternativeName>
        <fullName evidence="1">F-ATPase gamma subunit</fullName>
    </alternativeName>
</protein>
<organism>
    <name type="scientific">Campylobacter jejuni subsp. jejuni serotype O:2 (strain ATCC 700819 / NCTC 11168)</name>
    <dbReference type="NCBI Taxonomy" id="192222"/>
    <lineage>
        <taxon>Bacteria</taxon>
        <taxon>Pseudomonadati</taxon>
        <taxon>Campylobacterota</taxon>
        <taxon>Epsilonproteobacteria</taxon>
        <taxon>Campylobacterales</taxon>
        <taxon>Campylobacteraceae</taxon>
        <taxon>Campylobacter</taxon>
    </lineage>
</organism>
<feature type="chain" id="PRO_0000073260" description="ATP synthase gamma chain">
    <location>
        <begin position="1"/>
        <end position="294"/>
    </location>
</feature>
<accession>Q9PJ20</accession>
<accession>Q0PC31</accession>
<reference key="1">
    <citation type="journal article" date="2000" name="Nature">
        <title>The genome sequence of the food-borne pathogen Campylobacter jejuni reveals hypervariable sequences.</title>
        <authorList>
            <person name="Parkhill J."/>
            <person name="Wren B.W."/>
            <person name="Mungall K.L."/>
            <person name="Ketley J.M."/>
            <person name="Churcher C.M."/>
            <person name="Basham D."/>
            <person name="Chillingworth T."/>
            <person name="Davies R.M."/>
            <person name="Feltwell T."/>
            <person name="Holroyd S."/>
            <person name="Jagels K."/>
            <person name="Karlyshev A.V."/>
            <person name="Moule S."/>
            <person name="Pallen M.J."/>
            <person name="Penn C.W."/>
            <person name="Quail M.A."/>
            <person name="Rajandream M.A."/>
            <person name="Rutherford K.M."/>
            <person name="van Vliet A.H.M."/>
            <person name="Whitehead S."/>
            <person name="Barrell B.G."/>
        </authorList>
    </citation>
    <scope>NUCLEOTIDE SEQUENCE [LARGE SCALE GENOMIC DNA]</scope>
    <source>
        <strain>ATCC 700819 / NCTC 11168</strain>
    </source>
</reference>
<comment type="function">
    <text evidence="1">Produces ATP from ADP in the presence of a proton gradient across the membrane. The gamma chain is believed to be important in regulating ATPase activity and the flow of protons through the CF(0) complex.</text>
</comment>
<comment type="subunit">
    <text evidence="1">F-type ATPases have 2 components, CF(1) - the catalytic core - and CF(0) - the membrane proton channel. CF(1) has five subunits: alpha(3), beta(3), gamma(1), delta(1), epsilon(1). CF(0) has three main subunits: a, b and c.</text>
</comment>
<comment type="subcellular location">
    <subcellularLocation>
        <location evidence="1">Cell inner membrane</location>
        <topology evidence="1">Peripheral membrane protein</topology>
    </subcellularLocation>
</comment>
<comment type="similarity">
    <text evidence="1">Belongs to the ATPase gamma chain family.</text>
</comment>
<keyword id="KW-0066">ATP synthesis</keyword>
<keyword id="KW-0997">Cell inner membrane</keyword>
<keyword id="KW-1003">Cell membrane</keyword>
<keyword id="KW-0139">CF(1)</keyword>
<keyword id="KW-0375">Hydrogen ion transport</keyword>
<keyword id="KW-0406">Ion transport</keyword>
<keyword id="KW-0472">Membrane</keyword>
<keyword id="KW-1185">Reference proteome</keyword>
<keyword id="KW-0813">Transport</keyword>